<feature type="chain" id="PRO_0000167585" description="Ribosome-recycling factor">
    <location>
        <begin position="1"/>
        <end position="185"/>
    </location>
</feature>
<comment type="function">
    <text evidence="1">Responsible for the release of ribosomes from messenger RNA at the termination of protein biosynthesis. May increase the efficiency of translation by recycling ribosomes from one round of translation to another.</text>
</comment>
<comment type="subcellular location">
    <subcellularLocation>
        <location evidence="1">Cytoplasm</location>
    </subcellularLocation>
</comment>
<comment type="similarity">
    <text evidence="1">Belongs to the RRF family.</text>
</comment>
<name>RRF_XYLFA</name>
<protein>
    <recommendedName>
        <fullName evidence="1">Ribosome-recycling factor</fullName>
        <shortName evidence="1">RRF</shortName>
    </recommendedName>
    <alternativeName>
        <fullName evidence="1">Ribosome-releasing factor</fullName>
    </alternativeName>
</protein>
<organism>
    <name type="scientific">Xylella fastidiosa (strain 9a5c)</name>
    <dbReference type="NCBI Taxonomy" id="160492"/>
    <lineage>
        <taxon>Bacteria</taxon>
        <taxon>Pseudomonadati</taxon>
        <taxon>Pseudomonadota</taxon>
        <taxon>Gammaproteobacteria</taxon>
        <taxon>Lysobacterales</taxon>
        <taxon>Lysobacteraceae</taxon>
        <taxon>Xylella</taxon>
    </lineage>
</organism>
<gene>
    <name evidence="1" type="primary">frr</name>
    <name type="ordered locus">XF_1051</name>
</gene>
<evidence type="ECO:0000255" key="1">
    <source>
        <dbReference type="HAMAP-Rule" id="MF_00040"/>
    </source>
</evidence>
<reference key="1">
    <citation type="journal article" date="2000" name="Nature">
        <title>The genome sequence of the plant pathogen Xylella fastidiosa.</title>
        <authorList>
            <person name="Simpson A.J.G."/>
            <person name="Reinach F.C."/>
            <person name="Arruda P."/>
            <person name="Abreu F.A."/>
            <person name="Acencio M."/>
            <person name="Alvarenga R."/>
            <person name="Alves L.M.C."/>
            <person name="Araya J.E."/>
            <person name="Baia G.S."/>
            <person name="Baptista C.S."/>
            <person name="Barros M.H."/>
            <person name="Bonaccorsi E.D."/>
            <person name="Bordin S."/>
            <person name="Bove J.M."/>
            <person name="Briones M.R.S."/>
            <person name="Bueno M.R.P."/>
            <person name="Camargo A.A."/>
            <person name="Camargo L.E.A."/>
            <person name="Carraro D.M."/>
            <person name="Carrer H."/>
            <person name="Colauto N.B."/>
            <person name="Colombo C."/>
            <person name="Costa F.F."/>
            <person name="Costa M.C.R."/>
            <person name="Costa-Neto C.M."/>
            <person name="Coutinho L.L."/>
            <person name="Cristofani M."/>
            <person name="Dias-Neto E."/>
            <person name="Docena C."/>
            <person name="El-Dorry H."/>
            <person name="Facincani A.P."/>
            <person name="Ferreira A.J.S."/>
            <person name="Ferreira V.C.A."/>
            <person name="Ferro J.A."/>
            <person name="Fraga J.S."/>
            <person name="Franca S.C."/>
            <person name="Franco M.C."/>
            <person name="Frohme M."/>
            <person name="Furlan L.R."/>
            <person name="Garnier M."/>
            <person name="Goldman G.H."/>
            <person name="Goldman M.H.S."/>
            <person name="Gomes S.L."/>
            <person name="Gruber A."/>
            <person name="Ho P.L."/>
            <person name="Hoheisel J.D."/>
            <person name="Junqueira M.L."/>
            <person name="Kemper E.L."/>
            <person name="Kitajima J.P."/>
            <person name="Krieger J.E."/>
            <person name="Kuramae E.E."/>
            <person name="Laigret F."/>
            <person name="Lambais M.R."/>
            <person name="Leite L.C.C."/>
            <person name="Lemos E.G.M."/>
            <person name="Lemos M.V.F."/>
            <person name="Lopes S.A."/>
            <person name="Lopes C.R."/>
            <person name="Machado J.A."/>
            <person name="Machado M.A."/>
            <person name="Madeira A.M.B.N."/>
            <person name="Madeira H.M.F."/>
            <person name="Marino C.L."/>
            <person name="Marques M.V."/>
            <person name="Martins E.A.L."/>
            <person name="Martins E.M.F."/>
            <person name="Matsukuma A.Y."/>
            <person name="Menck C.F.M."/>
            <person name="Miracca E.C."/>
            <person name="Miyaki C.Y."/>
            <person name="Monteiro-Vitorello C.B."/>
            <person name="Moon D.H."/>
            <person name="Nagai M.A."/>
            <person name="Nascimento A.L.T.O."/>
            <person name="Netto L.E.S."/>
            <person name="Nhani A. Jr."/>
            <person name="Nobrega F.G."/>
            <person name="Nunes L.R."/>
            <person name="Oliveira M.A."/>
            <person name="de Oliveira M.C."/>
            <person name="de Oliveira R.C."/>
            <person name="Palmieri D.A."/>
            <person name="Paris A."/>
            <person name="Peixoto B.R."/>
            <person name="Pereira G.A.G."/>
            <person name="Pereira H.A. Jr."/>
            <person name="Pesquero J.B."/>
            <person name="Quaggio R.B."/>
            <person name="Roberto P.G."/>
            <person name="Rodrigues V."/>
            <person name="de Rosa A.J.M."/>
            <person name="de Rosa V.E. Jr."/>
            <person name="de Sa R.G."/>
            <person name="Santelli R.V."/>
            <person name="Sawasaki H.E."/>
            <person name="da Silva A.C.R."/>
            <person name="da Silva A.M."/>
            <person name="da Silva F.R."/>
            <person name="Silva W.A. Jr."/>
            <person name="da Silveira J.F."/>
            <person name="Silvestri M.L.Z."/>
            <person name="Siqueira W.J."/>
            <person name="de Souza A.A."/>
            <person name="de Souza A.P."/>
            <person name="Terenzi M.F."/>
            <person name="Truffi D."/>
            <person name="Tsai S.M."/>
            <person name="Tsuhako M.H."/>
            <person name="Vallada H."/>
            <person name="Van Sluys M.A."/>
            <person name="Verjovski-Almeida S."/>
            <person name="Vettore A.L."/>
            <person name="Zago M.A."/>
            <person name="Zatz M."/>
            <person name="Meidanis J."/>
            <person name="Setubal J.C."/>
        </authorList>
    </citation>
    <scope>NUCLEOTIDE SEQUENCE [LARGE SCALE GENOMIC DNA]</scope>
    <source>
        <strain>9a5c</strain>
    </source>
</reference>
<dbReference type="EMBL" id="AE003849">
    <property type="protein sequence ID" value="AAF83861.1"/>
    <property type="molecule type" value="Genomic_DNA"/>
</dbReference>
<dbReference type="PIR" id="C82729">
    <property type="entry name" value="C82729"/>
</dbReference>
<dbReference type="RefSeq" id="WP_010893570.1">
    <property type="nucleotide sequence ID" value="NC_002488.3"/>
</dbReference>
<dbReference type="SMR" id="Q9PEH7"/>
<dbReference type="STRING" id="160492.XF_1051"/>
<dbReference type="KEGG" id="xfa:XF_1051"/>
<dbReference type="eggNOG" id="COG0233">
    <property type="taxonomic scope" value="Bacteria"/>
</dbReference>
<dbReference type="HOGENOM" id="CLU_073981_2_0_6"/>
<dbReference type="Proteomes" id="UP000000812">
    <property type="component" value="Chromosome"/>
</dbReference>
<dbReference type="GO" id="GO:0005829">
    <property type="term" value="C:cytosol"/>
    <property type="evidence" value="ECO:0007669"/>
    <property type="project" value="GOC"/>
</dbReference>
<dbReference type="GO" id="GO:0043023">
    <property type="term" value="F:ribosomal large subunit binding"/>
    <property type="evidence" value="ECO:0007669"/>
    <property type="project" value="TreeGrafter"/>
</dbReference>
<dbReference type="GO" id="GO:0002184">
    <property type="term" value="P:cytoplasmic translational termination"/>
    <property type="evidence" value="ECO:0007669"/>
    <property type="project" value="TreeGrafter"/>
</dbReference>
<dbReference type="CDD" id="cd00520">
    <property type="entry name" value="RRF"/>
    <property type="match status" value="1"/>
</dbReference>
<dbReference type="FunFam" id="1.10.132.20:FF:000001">
    <property type="entry name" value="Ribosome-recycling factor"/>
    <property type="match status" value="1"/>
</dbReference>
<dbReference type="FunFam" id="3.30.1360.40:FF:000001">
    <property type="entry name" value="Ribosome-recycling factor"/>
    <property type="match status" value="1"/>
</dbReference>
<dbReference type="Gene3D" id="3.30.1360.40">
    <property type="match status" value="1"/>
</dbReference>
<dbReference type="Gene3D" id="1.10.132.20">
    <property type="entry name" value="Ribosome-recycling factor"/>
    <property type="match status" value="1"/>
</dbReference>
<dbReference type="HAMAP" id="MF_00040">
    <property type="entry name" value="RRF"/>
    <property type="match status" value="1"/>
</dbReference>
<dbReference type="InterPro" id="IPR002661">
    <property type="entry name" value="Ribosome_recyc_fac"/>
</dbReference>
<dbReference type="InterPro" id="IPR023584">
    <property type="entry name" value="Ribosome_recyc_fac_dom"/>
</dbReference>
<dbReference type="InterPro" id="IPR036191">
    <property type="entry name" value="RRF_sf"/>
</dbReference>
<dbReference type="NCBIfam" id="TIGR00496">
    <property type="entry name" value="frr"/>
    <property type="match status" value="1"/>
</dbReference>
<dbReference type="PANTHER" id="PTHR20982:SF3">
    <property type="entry name" value="MITOCHONDRIAL RIBOSOME RECYCLING FACTOR PSEUDO 1"/>
    <property type="match status" value="1"/>
</dbReference>
<dbReference type="PANTHER" id="PTHR20982">
    <property type="entry name" value="RIBOSOME RECYCLING FACTOR"/>
    <property type="match status" value="1"/>
</dbReference>
<dbReference type="Pfam" id="PF01765">
    <property type="entry name" value="RRF"/>
    <property type="match status" value="1"/>
</dbReference>
<dbReference type="SUPFAM" id="SSF55194">
    <property type="entry name" value="Ribosome recycling factor, RRF"/>
    <property type="match status" value="1"/>
</dbReference>
<sequence>MLNQIKQDAQDRMTKSIDALRNSLASVRTGRASPSLLDGIKIKAYGTDTPLNQVASISVSEGRSLVITVFDKNMSKDVEKAIYASDLGLTPTVVGTLIRLNLPPLTEERRKELTKVVHSEGEDTKVAIRNIRRDANQQIKDMLKSKEITEDEVRQGEEDIQKLTDKAIKSVDEVVKSKEQELMTV</sequence>
<keyword id="KW-0963">Cytoplasm</keyword>
<keyword id="KW-0648">Protein biosynthesis</keyword>
<accession>Q9PEH7</accession>
<proteinExistence type="inferred from homology"/>